<feature type="chain" id="PRO_0000157188" description="Putative septation protein SpoVG">
    <location>
        <begin position="1"/>
        <end position="97"/>
    </location>
</feature>
<feature type="strand" evidence="3">
    <location>
        <begin position="3"/>
        <end position="10"/>
    </location>
</feature>
<feature type="strand" evidence="3">
    <location>
        <begin position="13"/>
        <end position="25"/>
    </location>
</feature>
<feature type="turn" evidence="3">
    <location>
        <begin position="26"/>
        <end position="28"/>
    </location>
</feature>
<feature type="strand" evidence="3">
    <location>
        <begin position="29"/>
        <end position="39"/>
    </location>
</feature>
<feature type="strand" evidence="3">
    <location>
        <begin position="42"/>
        <end position="46"/>
    </location>
</feature>
<feature type="strand" evidence="3">
    <location>
        <begin position="49"/>
        <end position="51"/>
    </location>
</feature>
<feature type="strand" evidence="3">
    <location>
        <begin position="57"/>
        <end position="65"/>
    </location>
</feature>
<feature type="helix" evidence="3">
    <location>
        <begin position="66"/>
        <end position="90"/>
    </location>
</feature>
<gene>
    <name type="primary">spoVG</name>
    <name type="ordered locus">BSU00490</name>
</gene>
<proteinExistence type="evidence at protein level"/>
<organism>
    <name type="scientific">Bacillus subtilis (strain 168)</name>
    <dbReference type="NCBI Taxonomy" id="224308"/>
    <lineage>
        <taxon>Bacteria</taxon>
        <taxon>Bacillati</taxon>
        <taxon>Bacillota</taxon>
        <taxon>Bacilli</taxon>
        <taxon>Bacillales</taxon>
        <taxon>Bacillaceae</taxon>
        <taxon>Bacillus</taxon>
    </lineage>
</organism>
<name>SP5G_BACSU</name>
<dbReference type="EMBL" id="X62378">
    <property type="protein sequence ID" value="CAA44242.1"/>
    <property type="molecule type" value="Genomic_DNA"/>
</dbReference>
<dbReference type="EMBL" id="D26185">
    <property type="protein sequence ID" value="BAA05284.1"/>
    <property type="molecule type" value="Genomic_DNA"/>
</dbReference>
<dbReference type="EMBL" id="AL009126">
    <property type="protein sequence ID" value="CAB11825.1"/>
    <property type="molecule type" value="Genomic_DNA"/>
</dbReference>
<dbReference type="PIR" id="S18902">
    <property type="entry name" value="S18902"/>
</dbReference>
<dbReference type="RefSeq" id="NP_387930.1">
    <property type="nucleotide sequence ID" value="NC_000964.3"/>
</dbReference>
<dbReference type="RefSeq" id="WP_009966269.1">
    <property type="nucleotide sequence ID" value="NZ_OZ025638.1"/>
</dbReference>
<dbReference type="PDB" id="2IA9">
    <property type="method" value="X-ray"/>
    <property type="resolution" value="3.00 A"/>
    <property type="chains" value="A/B/C/D/E/F=1-97"/>
</dbReference>
<dbReference type="PDBsum" id="2IA9"/>
<dbReference type="SMR" id="P28015"/>
<dbReference type="FunCoup" id="P28015">
    <property type="interactions" value="86"/>
</dbReference>
<dbReference type="IntAct" id="P28015">
    <property type="interactions" value="1"/>
</dbReference>
<dbReference type="MINT" id="P28015"/>
<dbReference type="STRING" id="224308.BSU00490"/>
<dbReference type="PaxDb" id="224308-BSU00490"/>
<dbReference type="DNASU" id="936959"/>
<dbReference type="EnsemblBacteria" id="CAB11825">
    <property type="protein sequence ID" value="CAB11825"/>
    <property type="gene ID" value="BSU_00490"/>
</dbReference>
<dbReference type="GeneID" id="936959"/>
<dbReference type="KEGG" id="bsu:BSU00490"/>
<dbReference type="PATRIC" id="fig|224308.179.peg.49"/>
<dbReference type="eggNOG" id="COG2088">
    <property type="taxonomic scope" value="Bacteria"/>
</dbReference>
<dbReference type="InParanoid" id="P28015"/>
<dbReference type="OrthoDB" id="9796286at2"/>
<dbReference type="PhylomeDB" id="P28015"/>
<dbReference type="BioCyc" id="BSUB:BSU00490-MONOMER"/>
<dbReference type="EvolutionaryTrace" id="P28015"/>
<dbReference type="Proteomes" id="UP000001570">
    <property type="component" value="Chromosome"/>
</dbReference>
<dbReference type="GO" id="GO:0030436">
    <property type="term" value="P:asexual sporulation"/>
    <property type="evidence" value="ECO:0007669"/>
    <property type="project" value="UniProtKB-UniRule"/>
</dbReference>
<dbReference type="GO" id="GO:0000917">
    <property type="term" value="P:division septum assembly"/>
    <property type="evidence" value="ECO:0007669"/>
    <property type="project" value="UniProtKB-KW"/>
</dbReference>
<dbReference type="GO" id="GO:0030435">
    <property type="term" value="P:sporulation resulting in formation of a cellular spore"/>
    <property type="evidence" value="ECO:0007669"/>
    <property type="project" value="UniProtKB-KW"/>
</dbReference>
<dbReference type="FunFam" id="3.30.1120.40:FF:000001">
    <property type="entry name" value="Putative septation protein SpoVG"/>
    <property type="match status" value="1"/>
</dbReference>
<dbReference type="Gene3D" id="3.30.1120.40">
    <property type="entry name" value="Stage V sporulation protein G"/>
    <property type="match status" value="1"/>
</dbReference>
<dbReference type="HAMAP" id="MF_00819">
    <property type="entry name" value="SpoVG"/>
    <property type="match status" value="1"/>
</dbReference>
<dbReference type="InterPro" id="IPR007170">
    <property type="entry name" value="SpoVG"/>
</dbReference>
<dbReference type="InterPro" id="IPR036751">
    <property type="entry name" value="SpoVG_sf"/>
</dbReference>
<dbReference type="NCBIfam" id="NF009749">
    <property type="entry name" value="PRK13259.1"/>
    <property type="match status" value="1"/>
</dbReference>
<dbReference type="PANTHER" id="PTHR38429">
    <property type="entry name" value="SEPTATION PROTEIN SPOVG-RELATED"/>
    <property type="match status" value="1"/>
</dbReference>
<dbReference type="PANTHER" id="PTHR38429:SF1">
    <property type="entry name" value="SEPTATION PROTEIN SPOVG-RELATED"/>
    <property type="match status" value="1"/>
</dbReference>
<dbReference type="Pfam" id="PF04026">
    <property type="entry name" value="SpoVG"/>
    <property type="match status" value="1"/>
</dbReference>
<dbReference type="SUPFAM" id="SSF160537">
    <property type="entry name" value="SpoVG-like"/>
    <property type="match status" value="1"/>
</dbReference>
<keyword id="KW-0002">3D-structure</keyword>
<keyword id="KW-0131">Cell cycle</keyword>
<keyword id="KW-0132">Cell division</keyword>
<keyword id="KW-0903">Direct protein sequencing</keyword>
<keyword id="KW-1185">Reference proteome</keyword>
<keyword id="KW-0717">Septation</keyword>
<keyword id="KW-0749">Sporulation</keyword>
<comment type="function">
    <text evidence="1">Essential for sporulation. Interferes with or is a negative regulator of the pathway leading to asymmetric septation.</text>
</comment>
<comment type="developmental stage">
    <text>Specific to stage V sporulation.</text>
</comment>
<comment type="similarity">
    <text evidence="2">Belongs to the SpoVG family.</text>
</comment>
<reference key="1">
    <citation type="journal article" date="1992" name="Biochim. Biophys. Acta">
        <title>spoVG sequence of Bacillus megaterium and Bacillus subtilis.</title>
        <authorList>
            <person name="Hudspeth D.S.S."/>
            <person name="Vary P.S."/>
        </authorList>
    </citation>
    <scope>NUCLEOTIDE SEQUENCE [GENOMIC DNA]</scope>
    <source>
        <strain>168</strain>
    </source>
</reference>
<reference key="2">
    <citation type="journal article" date="1994" name="DNA Res.">
        <title>Systematic sequencing of the 180 kilobase region of the Bacillus subtilis chromosome containing the replication origin.</title>
        <authorList>
            <person name="Ogasawara N."/>
            <person name="Nakai S."/>
            <person name="Yoshikawa H."/>
        </authorList>
    </citation>
    <scope>NUCLEOTIDE SEQUENCE [GENOMIC DNA]</scope>
    <source>
        <strain>168</strain>
    </source>
</reference>
<reference key="3">
    <citation type="journal article" date="1997" name="Nature">
        <title>The complete genome sequence of the Gram-positive bacterium Bacillus subtilis.</title>
        <authorList>
            <person name="Kunst F."/>
            <person name="Ogasawara N."/>
            <person name="Moszer I."/>
            <person name="Albertini A.M."/>
            <person name="Alloni G."/>
            <person name="Azevedo V."/>
            <person name="Bertero M.G."/>
            <person name="Bessieres P."/>
            <person name="Bolotin A."/>
            <person name="Borchert S."/>
            <person name="Borriss R."/>
            <person name="Boursier L."/>
            <person name="Brans A."/>
            <person name="Braun M."/>
            <person name="Brignell S.C."/>
            <person name="Bron S."/>
            <person name="Brouillet S."/>
            <person name="Bruschi C.V."/>
            <person name="Caldwell B."/>
            <person name="Capuano V."/>
            <person name="Carter N.M."/>
            <person name="Choi S.-K."/>
            <person name="Codani J.-J."/>
            <person name="Connerton I.F."/>
            <person name="Cummings N.J."/>
            <person name="Daniel R.A."/>
            <person name="Denizot F."/>
            <person name="Devine K.M."/>
            <person name="Duesterhoeft A."/>
            <person name="Ehrlich S.D."/>
            <person name="Emmerson P.T."/>
            <person name="Entian K.-D."/>
            <person name="Errington J."/>
            <person name="Fabret C."/>
            <person name="Ferrari E."/>
            <person name="Foulger D."/>
            <person name="Fritz C."/>
            <person name="Fujita M."/>
            <person name="Fujita Y."/>
            <person name="Fuma S."/>
            <person name="Galizzi A."/>
            <person name="Galleron N."/>
            <person name="Ghim S.-Y."/>
            <person name="Glaser P."/>
            <person name="Goffeau A."/>
            <person name="Golightly E.J."/>
            <person name="Grandi G."/>
            <person name="Guiseppi G."/>
            <person name="Guy B.J."/>
            <person name="Haga K."/>
            <person name="Haiech J."/>
            <person name="Harwood C.R."/>
            <person name="Henaut A."/>
            <person name="Hilbert H."/>
            <person name="Holsappel S."/>
            <person name="Hosono S."/>
            <person name="Hullo M.-F."/>
            <person name="Itaya M."/>
            <person name="Jones L.-M."/>
            <person name="Joris B."/>
            <person name="Karamata D."/>
            <person name="Kasahara Y."/>
            <person name="Klaerr-Blanchard M."/>
            <person name="Klein C."/>
            <person name="Kobayashi Y."/>
            <person name="Koetter P."/>
            <person name="Koningstein G."/>
            <person name="Krogh S."/>
            <person name="Kumano M."/>
            <person name="Kurita K."/>
            <person name="Lapidus A."/>
            <person name="Lardinois S."/>
            <person name="Lauber J."/>
            <person name="Lazarevic V."/>
            <person name="Lee S.-M."/>
            <person name="Levine A."/>
            <person name="Liu H."/>
            <person name="Masuda S."/>
            <person name="Mauel C."/>
            <person name="Medigue C."/>
            <person name="Medina N."/>
            <person name="Mellado R.P."/>
            <person name="Mizuno M."/>
            <person name="Moestl D."/>
            <person name="Nakai S."/>
            <person name="Noback M."/>
            <person name="Noone D."/>
            <person name="O'Reilly M."/>
            <person name="Ogawa K."/>
            <person name="Ogiwara A."/>
            <person name="Oudega B."/>
            <person name="Park S.-H."/>
            <person name="Parro V."/>
            <person name="Pohl T.M."/>
            <person name="Portetelle D."/>
            <person name="Porwollik S."/>
            <person name="Prescott A.M."/>
            <person name="Presecan E."/>
            <person name="Pujic P."/>
            <person name="Purnelle B."/>
            <person name="Rapoport G."/>
            <person name="Rey M."/>
            <person name="Reynolds S."/>
            <person name="Rieger M."/>
            <person name="Rivolta C."/>
            <person name="Rocha E."/>
            <person name="Roche B."/>
            <person name="Rose M."/>
            <person name="Sadaie Y."/>
            <person name="Sato T."/>
            <person name="Scanlan E."/>
            <person name="Schleich S."/>
            <person name="Schroeter R."/>
            <person name="Scoffone F."/>
            <person name="Sekiguchi J."/>
            <person name="Sekowska A."/>
            <person name="Seror S.J."/>
            <person name="Serror P."/>
            <person name="Shin B.-S."/>
            <person name="Soldo B."/>
            <person name="Sorokin A."/>
            <person name="Tacconi E."/>
            <person name="Takagi T."/>
            <person name="Takahashi H."/>
            <person name="Takemaru K."/>
            <person name="Takeuchi M."/>
            <person name="Tamakoshi A."/>
            <person name="Tanaka T."/>
            <person name="Terpstra P."/>
            <person name="Tognoni A."/>
            <person name="Tosato V."/>
            <person name="Uchiyama S."/>
            <person name="Vandenbol M."/>
            <person name="Vannier F."/>
            <person name="Vassarotti A."/>
            <person name="Viari A."/>
            <person name="Wambutt R."/>
            <person name="Wedler E."/>
            <person name="Wedler H."/>
            <person name="Weitzenegger T."/>
            <person name="Winters P."/>
            <person name="Wipat A."/>
            <person name="Yamamoto H."/>
            <person name="Yamane K."/>
            <person name="Yasumoto K."/>
            <person name="Yata K."/>
            <person name="Yoshida K."/>
            <person name="Yoshikawa H.-F."/>
            <person name="Zumstein E."/>
            <person name="Yoshikawa H."/>
            <person name="Danchin A."/>
        </authorList>
    </citation>
    <scope>NUCLEOTIDE SEQUENCE [LARGE SCALE GENOMIC DNA]</scope>
    <source>
        <strain>168</strain>
    </source>
</reference>
<reference key="4">
    <citation type="journal article" date="1996" name="J. Bacteriol.">
        <title>Cold shock stress-induced proteins in Bacillus subtilis.</title>
        <authorList>
            <person name="Graumann P."/>
            <person name="Schroeder K."/>
            <person name="Schmid R."/>
            <person name="Marahiel M.A."/>
        </authorList>
    </citation>
    <scope>PROTEIN SEQUENCE OF 1-11</scope>
    <source>
        <strain>168 / JH642</strain>
    </source>
</reference>
<reference key="5">
    <citation type="journal article" date="1999" name="J. Bacteriol.">
        <title>Role of SpoVG in asymmetric septation in Bacillus subtilis.</title>
        <authorList>
            <person name="Matsuno K."/>
            <person name="Sonenshein A.L."/>
        </authorList>
    </citation>
    <scope>FUNCTION IN SEPTATION</scope>
</reference>
<sequence>MEVTDVRLRRVNTDGRMRAIASITLDHEFVVHDIRVIDGNNGLFVAMPSKRTPDGEFRDITHPINSSTRGKIQDAVLNEYHRLGDTEALEFEEAGAS</sequence>
<evidence type="ECO:0000269" key="1">
    <source>
    </source>
</evidence>
<evidence type="ECO:0000305" key="2"/>
<evidence type="ECO:0007829" key="3">
    <source>
        <dbReference type="PDB" id="2IA9"/>
    </source>
</evidence>
<protein>
    <recommendedName>
        <fullName>Putative septation protein SpoVG</fullName>
    </recommendedName>
    <alternativeName>
        <fullName>Stage V sporulation protein G</fullName>
    </alternativeName>
</protein>
<accession>P28015</accession>